<feature type="chain" id="PRO_0000171490" description="Small ribosomal subunit biogenesis GTPase RsgA 2">
    <location>
        <begin position="1"/>
        <end position="346"/>
    </location>
</feature>
<feature type="domain" description="CP-type G" evidence="2">
    <location>
        <begin position="93"/>
        <end position="248"/>
    </location>
</feature>
<feature type="binding site" evidence="1">
    <location>
        <begin position="138"/>
        <end position="141"/>
    </location>
    <ligand>
        <name>GTP</name>
        <dbReference type="ChEBI" id="CHEBI:37565"/>
    </ligand>
</feature>
<feature type="binding site" evidence="1">
    <location>
        <begin position="190"/>
        <end position="198"/>
    </location>
    <ligand>
        <name>GTP</name>
        <dbReference type="ChEBI" id="CHEBI:37565"/>
    </ligand>
</feature>
<feature type="binding site" evidence="1">
    <location>
        <position position="271"/>
    </location>
    <ligand>
        <name>Zn(2+)</name>
        <dbReference type="ChEBI" id="CHEBI:29105"/>
    </ligand>
</feature>
<feature type="binding site" evidence="1">
    <location>
        <position position="276"/>
    </location>
    <ligand>
        <name>Zn(2+)</name>
        <dbReference type="ChEBI" id="CHEBI:29105"/>
    </ligand>
</feature>
<feature type="binding site" evidence="1">
    <location>
        <position position="278"/>
    </location>
    <ligand>
        <name>Zn(2+)</name>
        <dbReference type="ChEBI" id="CHEBI:29105"/>
    </ligand>
</feature>
<feature type="binding site" evidence="1">
    <location>
        <position position="284"/>
    </location>
    <ligand>
        <name>Zn(2+)</name>
        <dbReference type="ChEBI" id="CHEBI:29105"/>
    </ligand>
</feature>
<gene>
    <name evidence="1" type="primary">rsgA2</name>
    <name type="ordered locus">LMOf2365_1349</name>
</gene>
<keyword id="KW-0963">Cytoplasm</keyword>
<keyword id="KW-0342">GTP-binding</keyword>
<keyword id="KW-0378">Hydrolase</keyword>
<keyword id="KW-0479">Metal-binding</keyword>
<keyword id="KW-0547">Nucleotide-binding</keyword>
<keyword id="KW-0690">Ribosome biogenesis</keyword>
<keyword id="KW-0694">RNA-binding</keyword>
<keyword id="KW-0699">rRNA-binding</keyword>
<keyword id="KW-0862">Zinc</keyword>
<accession>Q71ZZ0</accession>
<reference key="1">
    <citation type="journal article" date="2004" name="Nucleic Acids Res.">
        <title>Whole genome comparisons of serotype 4b and 1/2a strains of the food-borne pathogen Listeria monocytogenes reveal new insights into the core genome components of this species.</title>
        <authorList>
            <person name="Nelson K.E."/>
            <person name="Fouts D.E."/>
            <person name="Mongodin E.F."/>
            <person name="Ravel J."/>
            <person name="DeBoy R.T."/>
            <person name="Kolonay J.F."/>
            <person name="Rasko D.A."/>
            <person name="Angiuoli S.V."/>
            <person name="Gill S.R."/>
            <person name="Paulsen I.T."/>
            <person name="Peterson J.D."/>
            <person name="White O."/>
            <person name="Nelson W.C."/>
            <person name="Nierman W.C."/>
            <person name="Beanan M.J."/>
            <person name="Brinkac L.M."/>
            <person name="Daugherty S.C."/>
            <person name="Dodson R.J."/>
            <person name="Durkin A.S."/>
            <person name="Madupu R."/>
            <person name="Haft D.H."/>
            <person name="Selengut J."/>
            <person name="Van Aken S.E."/>
            <person name="Khouri H.M."/>
            <person name="Fedorova N."/>
            <person name="Forberger H.A."/>
            <person name="Tran B."/>
            <person name="Kathariou S."/>
            <person name="Wonderling L.D."/>
            <person name="Uhlich G.A."/>
            <person name="Bayles D.O."/>
            <person name="Luchansky J.B."/>
            <person name="Fraser C.M."/>
        </authorList>
    </citation>
    <scope>NUCLEOTIDE SEQUENCE [LARGE SCALE GENOMIC DNA]</scope>
    <source>
        <strain>F2365</strain>
    </source>
</reference>
<sequence>MTLEQYGFTNFFKEQKIAATSSYGRVTAVFRDYYRVITENEEFLASLKRGNFYELSSTSLPAVGDFVEVSSDAQILSVLERKTVFSRMNKDSEEQLIAANFDYALIVMSLNHDFNLNRLERYLTVAWDSGATPIIILTKADLVEDLTAFAQQLETVAYGVPAYYVDNLSHHGFEALERDLKPNSTLVLLGSSGVGKSSFINSLAGTDLMKTAGIREDDSKGKHTTTHREMHLLTNGWIVIDTPGMREFGVGFNQAGLETTFSDVEELAEGCRFHDCSHTQEPGCAVKAALEDGTLTMQHYENWLKLQREMAYHARKNSPALARQERDRWKVIQKSLRTHLKTRPKK</sequence>
<proteinExistence type="inferred from homology"/>
<organism>
    <name type="scientific">Listeria monocytogenes serotype 4b (strain F2365)</name>
    <dbReference type="NCBI Taxonomy" id="265669"/>
    <lineage>
        <taxon>Bacteria</taxon>
        <taxon>Bacillati</taxon>
        <taxon>Bacillota</taxon>
        <taxon>Bacilli</taxon>
        <taxon>Bacillales</taxon>
        <taxon>Listeriaceae</taxon>
        <taxon>Listeria</taxon>
    </lineage>
</organism>
<name>RSGA2_LISMF</name>
<evidence type="ECO:0000255" key="1">
    <source>
        <dbReference type="HAMAP-Rule" id="MF_01820"/>
    </source>
</evidence>
<evidence type="ECO:0000255" key="2">
    <source>
        <dbReference type="PROSITE-ProRule" id="PRU01058"/>
    </source>
</evidence>
<comment type="function">
    <text evidence="1">One of several proteins that assist in the late maturation steps of the functional core of the 30S ribosomal subunit. Helps release RbfA from mature subunits. May play a role in the assembly of ribosomal proteins into the subunit. Circularly permuted GTPase that catalyzes slow GTP hydrolysis, GTPase activity is stimulated by the 30S ribosomal subunit.</text>
</comment>
<comment type="cofactor">
    <cofactor evidence="1">
        <name>Zn(2+)</name>
        <dbReference type="ChEBI" id="CHEBI:29105"/>
    </cofactor>
    <text evidence="1">Binds 1 zinc ion per subunit.</text>
</comment>
<comment type="subunit">
    <text evidence="1">Monomer. Associates with 30S ribosomal subunit, binds 16S rRNA.</text>
</comment>
<comment type="subcellular location">
    <subcellularLocation>
        <location evidence="1">Cytoplasm</location>
    </subcellularLocation>
</comment>
<comment type="similarity">
    <text evidence="1">Belongs to the TRAFAC class YlqF/YawG GTPase family. RsgA subfamily.</text>
</comment>
<protein>
    <recommendedName>
        <fullName evidence="1">Small ribosomal subunit biogenesis GTPase RsgA 2</fullName>
        <ecNumber evidence="1">3.6.1.-</ecNumber>
    </recommendedName>
</protein>
<dbReference type="EC" id="3.6.1.-" evidence="1"/>
<dbReference type="EMBL" id="AE017262">
    <property type="protein sequence ID" value="AAT04124.1"/>
    <property type="molecule type" value="Genomic_DNA"/>
</dbReference>
<dbReference type="SMR" id="Q71ZZ0"/>
<dbReference type="KEGG" id="lmf:LMOf2365_1349"/>
<dbReference type="HOGENOM" id="CLU_033617_0_1_9"/>
<dbReference type="GO" id="GO:0005737">
    <property type="term" value="C:cytoplasm"/>
    <property type="evidence" value="ECO:0007669"/>
    <property type="project" value="UniProtKB-SubCell"/>
</dbReference>
<dbReference type="GO" id="GO:0005525">
    <property type="term" value="F:GTP binding"/>
    <property type="evidence" value="ECO:0007669"/>
    <property type="project" value="UniProtKB-UniRule"/>
</dbReference>
<dbReference type="GO" id="GO:0003924">
    <property type="term" value="F:GTPase activity"/>
    <property type="evidence" value="ECO:0007669"/>
    <property type="project" value="UniProtKB-UniRule"/>
</dbReference>
<dbReference type="GO" id="GO:0046872">
    <property type="term" value="F:metal ion binding"/>
    <property type="evidence" value="ECO:0007669"/>
    <property type="project" value="UniProtKB-KW"/>
</dbReference>
<dbReference type="GO" id="GO:0019843">
    <property type="term" value="F:rRNA binding"/>
    <property type="evidence" value="ECO:0007669"/>
    <property type="project" value="UniProtKB-KW"/>
</dbReference>
<dbReference type="GO" id="GO:0042274">
    <property type="term" value="P:ribosomal small subunit biogenesis"/>
    <property type="evidence" value="ECO:0007669"/>
    <property type="project" value="UniProtKB-UniRule"/>
</dbReference>
<dbReference type="CDD" id="cd01854">
    <property type="entry name" value="YjeQ_EngC"/>
    <property type="match status" value="1"/>
</dbReference>
<dbReference type="Gene3D" id="3.40.50.300">
    <property type="entry name" value="P-loop containing nucleotide triphosphate hydrolases"/>
    <property type="match status" value="1"/>
</dbReference>
<dbReference type="Gene3D" id="1.10.40.50">
    <property type="entry name" value="Probable gtpase engc, domain 3"/>
    <property type="match status" value="1"/>
</dbReference>
<dbReference type="HAMAP" id="MF_01820">
    <property type="entry name" value="GTPase_RsgA"/>
    <property type="match status" value="1"/>
</dbReference>
<dbReference type="InterPro" id="IPR030378">
    <property type="entry name" value="G_CP_dom"/>
</dbReference>
<dbReference type="InterPro" id="IPR027417">
    <property type="entry name" value="P-loop_NTPase"/>
</dbReference>
<dbReference type="InterPro" id="IPR004881">
    <property type="entry name" value="Ribosome_biogen_GTPase_RsgA"/>
</dbReference>
<dbReference type="InterPro" id="IPR010914">
    <property type="entry name" value="RsgA_GTPase_dom"/>
</dbReference>
<dbReference type="NCBIfam" id="TIGR00157">
    <property type="entry name" value="ribosome small subunit-dependent GTPase A"/>
    <property type="match status" value="1"/>
</dbReference>
<dbReference type="PANTHER" id="PTHR32120">
    <property type="entry name" value="SMALL RIBOSOMAL SUBUNIT BIOGENESIS GTPASE RSGA"/>
    <property type="match status" value="1"/>
</dbReference>
<dbReference type="PANTHER" id="PTHR32120:SF10">
    <property type="entry name" value="SMALL RIBOSOMAL SUBUNIT BIOGENESIS GTPASE RSGA"/>
    <property type="match status" value="1"/>
</dbReference>
<dbReference type="Pfam" id="PF03193">
    <property type="entry name" value="RsgA_GTPase"/>
    <property type="match status" value="1"/>
</dbReference>
<dbReference type="SUPFAM" id="SSF52540">
    <property type="entry name" value="P-loop containing nucleoside triphosphate hydrolases"/>
    <property type="match status" value="1"/>
</dbReference>
<dbReference type="PROSITE" id="PS50936">
    <property type="entry name" value="ENGC_GTPASE"/>
    <property type="match status" value="1"/>
</dbReference>
<dbReference type="PROSITE" id="PS51721">
    <property type="entry name" value="G_CP"/>
    <property type="match status" value="1"/>
</dbReference>